<gene>
    <name evidence="1" type="primary">apaG</name>
    <name type="ordered locus">SEN0091</name>
</gene>
<dbReference type="EMBL" id="AM933172">
    <property type="protein sequence ID" value="CAR31678.1"/>
    <property type="molecule type" value="Genomic_DNA"/>
</dbReference>
<dbReference type="RefSeq" id="WP_000610894.1">
    <property type="nucleotide sequence ID" value="NC_011294.1"/>
</dbReference>
<dbReference type="SMR" id="B5R1S7"/>
<dbReference type="GeneID" id="66754612"/>
<dbReference type="KEGG" id="set:SEN0091"/>
<dbReference type="HOGENOM" id="CLU_128074_0_0_6"/>
<dbReference type="Proteomes" id="UP000000613">
    <property type="component" value="Chromosome"/>
</dbReference>
<dbReference type="GO" id="GO:0070987">
    <property type="term" value="P:error-free translesion synthesis"/>
    <property type="evidence" value="ECO:0007669"/>
    <property type="project" value="TreeGrafter"/>
</dbReference>
<dbReference type="Gene3D" id="2.60.40.1470">
    <property type="entry name" value="ApaG domain"/>
    <property type="match status" value="1"/>
</dbReference>
<dbReference type="HAMAP" id="MF_00791">
    <property type="entry name" value="ApaG"/>
    <property type="match status" value="1"/>
</dbReference>
<dbReference type="InterPro" id="IPR007474">
    <property type="entry name" value="ApaG_domain"/>
</dbReference>
<dbReference type="InterPro" id="IPR036767">
    <property type="entry name" value="ApaG_sf"/>
</dbReference>
<dbReference type="InterPro" id="IPR023065">
    <property type="entry name" value="Uncharacterised_ApaG"/>
</dbReference>
<dbReference type="NCBIfam" id="NF003967">
    <property type="entry name" value="PRK05461.1"/>
    <property type="match status" value="1"/>
</dbReference>
<dbReference type="PANTHER" id="PTHR14289">
    <property type="entry name" value="F-BOX ONLY PROTEIN 3"/>
    <property type="match status" value="1"/>
</dbReference>
<dbReference type="PANTHER" id="PTHR14289:SF16">
    <property type="entry name" value="POLYMERASE DELTA-INTERACTING PROTEIN 2"/>
    <property type="match status" value="1"/>
</dbReference>
<dbReference type="Pfam" id="PF04379">
    <property type="entry name" value="DUF525"/>
    <property type="match status" value="1"/>
</dbReference>
<dbReference type="SUPFAM" id="SSF110069">
    <property type="entry name" value="ApaG-like"/>
    <property type="match status" value="1"/>
</dbReference>
<dbReference type="PROSITE" id="PS51087">
    <property type="entry name" value="APAG"/>
    <property type="match status" value="1"/>
</dbReference>
<reference key="1">
    <citation type="journal article" date="2008" name="Genome Res.">
        <title>Comparative genome analysis of Salmonella enteritidis PT4 and Salmonella gallinarum 287/91 provides insights into evolutionary and host adaptation pathways.</title>
        <authorList>
            <person name="Thomson N.R."/>
            <person name="Clayton D.J."/>
            <person name="Windhorst D."/>
            <person name="Vernikos G."/>
            <person name="Davidson S."/>
            <person name="Churcher C."/>
            <person name="Quail M.A."/>
            <person name="Stevens M."/>
            <person name="Jones M.A."/>
            <person name="Watson M."/>
            <person name="Barron A."/>
            <person name="Layton A."/>
            <person name="Pickard D."/>
            <person name="Kingsley R.A."/>
            <person name="Bignell A."/>
            <person name="Clark L."/>
            <person name="Harris B."/>
            <person name="Ormond D."/>
            <person name="Abdellah Z."/>
            <person name="Brooks K."/>
            <person name="Cherevach I."/>
            <person name="Chillingworth T."/>
            <person name="Woodward J."/>
            <person name="Norberczak H."/>
            <person name="Lord A."/>
            <person name="Arrowsmith C."/>
            <person name="Jagels K."/>
            <person name="Moule S."/>
            <person name="Mungall K."/>
            <person name="Saunders M."/>
            <person name="Whitehead S."/>
            <person name="Chabalgoity J.A."/>
            <person name="Maskell D."/>
            <person name="Humphreys T."/>
            <person name="Roberts M."/>
            <person name="Barrow P.A."/>
            <person name="Dougan G."/>
            <person name="Parkhill J."/>
        </authorList>
    </citation>
    <scope>NUCLEOTIDE SEQUENCE [LARGE SCALE GENOMIC DNA]</scope>
    <source>
        <strain>P125109</strain>
    </source>
</reference>
<sequence>MINSPRVCIQVQSVYIEAQSSPDDERYVFAYTVTIRNLGRAPVQLLGRYWLITNGHGRETEVQGEGVVGVQPRIAPGEEYQYTSGAVIETPLGTMQGHYEMIDENGDAFTIDIPVFRLAVPTLIH</sequence>
<name>APAG_SALEP</name>
<proteinExistence type="inferred from homology"/>
<protein>
    <recommendedName>
        <fullName evidence="1">Protein ApaG</fullName>
    </recommendedName>
</protein>
<feature type="chain" id="PRO_1000133809" description="Protein ApaG">
    <location>
        <begin position="1"/>
        <end position="125"/>
    </location>
</feature>
<feature type="domain" description="ApaG" evidence="1">
    <location>
        <begin position="1"/>
        <end position="125"/>
    </location>
</feature>
<evidence type="ECO:0000255" key="1">
    <source>
        <dbReference type="HAMAP-Rule" id="MF_00791"/>
    </source>
</evidence>
<accession>B5R1S7</accession>
<organism>
    <name type="scientific">Salmonella enteritidis PT4 (strain P125109)</name>
    <dbReference type="NCBI Taxonomy" id="550537"/>
    <lineage>
        <taxon>Bacteria</taxon>
        <taxon>Pseudomonadati</taxon>
        <taxon>Pseudomonadota</taxon>
        <taxon>Gammaproteobacteria</taxon>
        <taxon>Enterobacterales</taxon>
        <taxon>Enterobacteriaceae</taxon>
        <taxon>Salmonella</taxon>
    </lineage>
</organism>